<comment type="function">
    <text evidence="1">Transfers the 4'-phosphopantetheine moiety from coenzyme A to a Ser of acyl-carrier-protein.</text>
</comment>
<comment type="catalytic activity">
    <reaction evidence="1">
        <text>apo-[ACP] + CoA = holo-[ACP] + adenosine 3',5'-bisphosphate + H(+)</text>
        <dbReference type="Rhea" id="RHEA:12068"/>
        <dbReference type="Rhea" id="RHEA-COMP:9685"/>
        <dbReference type="Rhea" id="RHEA-COMP:9690"/>
        <dbReference type="ChEBI" id="CHEBI:15378"/>
        <dbReference type="ChEBI" id="CHEBI:29999"/>
        <dbReference type="ChEBI" id="CHEBI:57287"/>
        <dbReference type="ChEBI" id="CHEBI:58343"/>
        <dbReference type="ChEBI" id="CHEBI:64479"/>
        <dbReference type="EC" id="2.7.8.7"/>
    </reaction>
</comment>
<comment type="cofactor">
    <cofactor evidence="1">
        <name>Mg(2+)</name>
        <dbReference type="ChEBI" id="CHEBI:18420"/>
    </cofactor>
</comment>
<comment type="subcellular location">
    <subcellularLocation>
        <location evidence="1">Cytoplasm</location>
    </subcellularLocation>
</comment>
<comment type="similarity">
    <text evidence="1">Belongs to the P-Pant transferase superfamily. AcpS family.</text>
</comment>
<gene>
    <name evidence="1" type="primary">acpS</name>
    <name type="ordered locus">LMHCC_1741</name>
</gene>
<evidence type="ECO:0000255" key="1">
    <source>
        <dbReference type="HAMAP-Rule" id="MF_00101"/>
    </source>
</evidence>
<keyword id="KW-0963">Cytoplasm</keyword>
<keyword id="KW-0275">Fatty acid biosynthesis</keyword>
<keyword id="KW-0276">Fatty acid metabolism</keyword>
<keyword id="KW-0444">Lipid biosynthesis</keyword>
<keyword id="KW-0443">Lipid metabolism</keyword>
<keyword id="KW-0460">Magnesium</keyword>
<keyword id="KW-0479">Metal-binding</keyword>
<keyword id="KW-0808">Transferase</keyword>
<dbReference type="EC" id="2.7.8.7" evidence="1"/>
<dbReference type="EMBL" id="CP001175">
    <property type="protein sequence ID" value="ACK40082.1"/>
    <property type="molecule type" value="Genomic_DNA"/>
</dbReference>
<dbReference type="RefSeq" id="WP_003729429.1">
    <property type="nucleotide sequence ID" value="NC_011660.1"/>
</dbReference>
<dbReference type="SMR" id="B8DG74"/>
<dbReference type="KEGG" id="lmh:LMHCC_1741"/>
<dbReference type="HOGENOM" id="CLU_089696_1_2_9"/>
<dbReference type="GO" id="GO:0005737">
    <property type="term" value="C:cytoplasm"/>
    <property type="evidence" value="ECO:0007669"/>
    <property type="project" value="UniProtKB-SubCell"/>
</dbReference>
<dbReference type="GO" id="GO:0008897">
    <property type="term" value="F:holo-[acyl-carrier-protein] synthase activity"/>
    <property type="evidence" value="ECO:0007669"/>
    <property type="project" value="UniProtKB-UniRule"/>
</dbReference>
<dbReference type="GO" id="GO:0000287">
    <property type="term" value="F:magnesium ion binding"/>
    <property type="evidence" value="ECO:0007669"/>
    <property type="project" value="UniProtKB-UniRule"/>
</dbReference>
<dbReference type="GO" id="GO:0006633">
    <property type="term" value="P:fatty acid biosynthetic process"/>
    <property type="evidence" value="ECO:0007669"/>
    <property type="project" value="UniProtKB-UniRule"/>
</dbReference>
<dbReference type="Gene3D" id="3.90.470.20">
    <property type="entry name" value="4'-phosphopantetheinyl transferase domain"/>
    <property type="match status" value="1"/>
</dbReference>
<dbReference type="HAMAP" id="MF_00101">
    <property type="entry name" value="AcpS"/>
    <property type="match status" value="1"/>
</dbReference>
<dbReference type="InterPro" id="IPR008278">
    <property type="entry name" value="4-PPantetheinyl_Trfase_dom"/>
</dbReference>
<dbReference type="InterPro" id="IPR037143">
    <property type="entry name" value="4-PPantetheinyl_Trfase_dom_sf"/>
</dbReference>
<dbReference type="InterPro" id="IPR002582">
    <property type="entry name" value="ACPS"/>
</dbReference>
<dbReference type="InterPro" id="IPR004568">
    <property type="entry name" value="Ppantetheine-prot_Trfase_dom"/>
</dbReference>
<dbReference type="NCBIfam" id="TIGR00516">
    <property type="entry name" value="acpS"/>
    <property type="match status" value="1"/>
</dbReference>
<dbReference type="NCBIfam" id="TIGR00556">
    <property type="entry name" value="pantethn_trn"/>
    <property type="match status" value="1"/>
</dbReference>
<dbReference type="Pfam" id="PF01648">
    <property type="entry name" value="ACPS"/>
    <property type="match status" value="1"/>
</dbReference>
<dbReference type="SUPFAM" id="SSF56214">
    <property type="entry name" value="4'-phosphopantetheinyl transferase"/>
    <property type="match status" value="1"/>
</dbReference>
<proteinExistence type="inferred from homology"/>
<feature type="chain" id="PRO_1000118813" description="Holo-[acyl-carrier-protein] synthase">
    <location>
        <begin position="1"/>
        <end position="118"/>
    </location>
</feature>
<feature type="binding site" evidence="1">
    <location>
        <position position="8"/>
    </location>
    <ligand>
        <name>Mg(2+)</name>
        <dbReference type="ChEBI" id="CHEBI:18420"/>
    </ligand>
</feature>
<feature type="binding site" evidence="1">
    <location>
        <position position="58"/>
    </location>
    <ligand>
        <name>Mg(2+)</name>
        <dbReference type="ChEBI" id="CHEBI:18420"/>
    </ligand>
</feature>
<name>ACPS_LISMH</name>
<accession>B8DG74</accession>
<protein>
    <recommendedName>
        <fullName evidence="1">Holo-[acyl-carrier-protein] synthase</fullName>
        <shortName evidence="1">Holo-ACP synthase</shortName>
        <ecNumber evidence="1">2.7.8.7</ecNumber>
    </recommendedName>
    <alternativeName>
        <fullName evidence="1">4'-phosphopantetheinyl transferase AcpS</fullName>
    </alternativeName>
</protein>
<organism>
    <name type="scientific">Listeria monocytogenes serotype 4a (strain HCC23)</name>
    <dbReference type="NCBI Taxonomy" id="552536"/>
    <lineage>
        <taxon>Bacteria</taxon>
        <taxon>Bacillati</taxon>
        <taxon>Bacillota</taxon>
        <taxon>Bacilli</taxon>
        <taxon>Bacillales</taxon>
        <taxon>Listeriaceae</taxon>
        <taxon>Listeria</taxon>
    </lineage>
</organism>
<sequence length="118" mass="13199">MIKGIGLDMIDLERVKQVVEKNPRFIERVLTEKEIKQFEKYEGNRKIEFLAGRFAAKEAYAKANGTGFGKHLSFTDVEILQVEDGRPHVTLPANAGENVFVSITHTARSAAAQVIIEI</sequence>
<reference key="1">
    <citation type="journal article" date="2011" name="J. Bacteriol.">
        <title>Genome sequence of lineage III Listeria monocytogenes strain HCC23.</title>
        <authorList>
            <person name="Steele C.L."/>
            <person name="Donaldson J.R."/>
            <person name="Paul D."/>
            <person name="Banes M.M."/>
            <person name="Arick T."/>
            <person name="Bridges S.M."/>
            <person name="Lawrence M.L."/>
        </authorList>
    </citation>
    <scope>NUCLEOTIDE SEQUENCE [LARGE SCALE GENOMIC DNA]</scope>
    <source>
        <strain>HCC23</strain>
    </source>
</reference>